<reference key="1">
    <citation type="journal article" date="2000" name="Nature">
        <title>Sequence and analysis of chromosome 1 of the plant Arabidopsis thaliana.</title>
        <authorList>
            <person name="Theologis A."/>
            <person name="Ecker J.R."/>
            <person name="Palm C.J."/>
            <person name="Federspiel N.A."/>
            <person name="Kaul S."/>
            <person name="White O."/>
            <person name="Alonso J."/>
            <person name="Altafi H."/>
            <person name="Araujo R."/>
            <person name="Bowman C.L."/>
            <person name="Brooks S.Y."/>
            <person name="Buehler E."/>
            <person name="Chan A."/>
            <person name="Chao Q."/>
            <person name="Chen H."/>
            <person name="Cheuk R.F."/>
            <person name="Chin C.W."/>
            <person name="Chung M.K."/>
            <person name="Conn L."/>
            <person name="Conway A.B."/>
            <person name="Conway A.R."/>
            <person name="Creasy T.H."/>
            <person name="Dewar K."/>
            <person name="Dunn P."/>
            <person name="Etgu P."/>
            <person name="Feldblyum T.V."/>
            <person name="Feng J.-D."/>
            <person name="Fong B."/>
            <person name="Fujii C.Y."/>
            <person name="Gill J.E."/>
            <person name="Goldsmith A.D."/>
            <person name="Haas B."/>
            <person name="Hansen N.F."/>
            <person name="Hughes B."/>
            <person name="Huizar L."/>
            <person name="Hunter J.L."/>
            <person name="Jenkins J."/>
            <person name="Johnson-Hopson C."/>
            <person name="Khan S."/>
            <person name="Khaykin E."/>
            <person name="Kim C.J."/>
            <person name="Koo H.L."/>
            <person name="Kremenetskaia I."/>
            <person name="Kurtz D.B."/>
            <person name="Kwan A."/>
            <person name="Lam B."/>
            <person name="Langin-Hooper S."/>
            <person name="Lee A."/>
            <person name="Lee J.M."/>
            <person name="Lenz C.A."/>
            <person name="Li J.H."/>
            <person name="Li Y.-P."/>
            <person name="Lin X."/>
            <person name="Liu S.X."/>
            <person name="Liu Z.A."/>
            <person name="Luros J.S."/>
            <person name="Maiti R."/>
            <person name="Marziali A."/>
            <person name="Militscher J."/>
            <person name="Miranda M."/>
            <person name="Nguyen M."/>
            <person name="Nierman W.C."/>
            <person name="Osborne B.I."/>
            <person name="Pai G."/>
            <person name="Peterson J."/>
            <person name="Pham P.K."/>
            <person name="Rizzo M."/>
            <person name="Rooney T."/>
            <person name="Rowley D."/>
            <person name="Sakano H."/>
            <person name="Salzberg S.L."/>
            <person name="Schwartz J.R."/>
            <person name="Shinn P."/>
            <person name="Southwick A.M."/>
            <person name="Sun H."/>
            <person name="Tallon L.J."/>
            <person name="Tambunga G."/>
            <person name="Toriumi M.J."/>
            <person name="Town C.D."/>
            <person name="Utterback T."/>
            <person name="Van Aken S."/>
            <person name="Vaysberg M."/>
            <person name="Vysotskaia V.S."/>
            <person name="Walker M."/>
            <person name="Wu D."/>
            <person name="Yu G."/>
            <person name="Fraser C.M."/>
            <person name="Venter J.C."/>
            <person name="Davis R.W."/>
        </authorList>
    </citation>
    <scope>NUCLEOTIDE SEQUENCE [LARGE SCALE GENOMIC DNA]</scope>
    <source>
        <strain>cv. Columbia</strain>
    </source>
</reference>
<reference key="2">
    <citation type="journal article" date="2017" name="Plant J.">
        <title>Araport11: a complete reannotation of the Arabidopsis thaliana reference genome.</title>
        <authorList>
            <person name="Cheng C.Y."/>
            <person name="Krishnakumar V."/>
            <person name="Chan A.P."/>
            <person name="Thibaud-Nissen F."/>
            <person name="Schobel S."/>
            <person name="Town C.D."/>
        </authorList>
    </citation>
    <scope>GENOME REANNOTATION</scope>
    <source>
        <strain>cv. Columbia</strain>
    </source>
</reference>
<accession>P0C6E7</accession>
<accession>Q9LQ93</accession>
<keyword id="KW-0175">Coiled coil</keyword>
<keyword id="KW-1185">Reference proteome</keyword>
<keyword id="KW-0808">Transferase</keyword>
<keyword id="KW-0833">Ubl conjugation pathway</keyword>
<name>PUB55_ARATH</name>
<dbReference type="EC" id="2.3.2.27"/>
<dbReference type="EMBL" id="AC009273">
    <property type="protein sequence ID" value="AAF78397.1"/>
    <property type="status" value="ALT_SEQ"/>
    <property type="molecule type" value="Genomic_DNA"/>
</dbReference>
<dbReference type="EMBL" id="CP002684">
    <property type="protein sequence ID" value="AEE27319.1"/>
    <property type="molecule type" value="Genomic_DNA"/>
</dbReference>
<dbReference type="PIR" id="E86147">
    <property type="entry name" value="E86147"/>
</dbReference>
<dbReference type="RefSeq" id="NP_171672.1">
    <property type="nucleotide sequence ID" value="NM_100048.1"/>
</dbReference>
<dbReference type="SMR" id="P0C6E7"/>
<dbReference type="iPTMnet" id="P0C6E7"/>
<dbReference type="PaxDb" id="3702-AT1G01660.1"/>
<dbReference type="EnsemblPlants" id="AT1G01660.1">
    <property type="protein sequence ID" value="AT1G01660.1"/>
    <property type="gene ID" value="AT1G01660"/>
</dbReference>
<dbReference type="GeneID" id="839461"/>
<dbReference type="Gramene" id="AT1G01660.1">
    <property type="protein sequence ID" value="AT1G01660.1"/>
    <property type="gene ID" value="AT1G01660"/>
</dbReference>
<dbReference type="KEGG" id="ath:AT1G01660"/>
<dbReference type="Araport" id="AT1G01660"/>
<dbReference type="TAIR" id="AT1G01660"/>
<dbReference type="eggNOG" id="ENOG502QQ1P">
    <property type="taxonomic scope" value="Eukaryota"/>
</dbReference>
<dbReference type="HOGENOM" id="CLU_036548_0_0_1"/>
<dbReference type="InParanoid" id="P0C6E7"/>
<dbReference type="PhylomeDB" id="P0C6E7"/>
<dbReference type="UniPathway" id="UPA00143"/>
<dbReference type="PRO" id="PR:P0C6E7"/>
<dbReference type="Proteomes" id="UP000006548">
    <property type="component" value="Chromosome 1"/>
</dbReference>
<dbReference type="ExpressionAtlas" id="P0C6E7">
    <property type="expression patterns" value="baseline and differential"/>
</dbReference>
<dbReference type="GO" id="GO:0004842">
    <property type="term" value="F:ubiquitin-protein transferase activity"/>
    <property type="evidence" value="ECO:0007669"/>
    <property type="project" value="InterPro"/>
</dbReference>
<dbReference type="GO" id="GO:0016567">
    <property type="term" value="P:protein ubiquitination"/>
    <property type="evidence" value="ECO:0007669"/>
    <property type="project" value="UniProtKB-UniPathway"/>
</dbReference>
<dbReference type="CDD" id="cd16655">
    <property type="entry name" value="RING-Ubox_WDSUB1-like"/>
    <property type="match status" value="1"/>
</dbReference>
<dbReference type="CDD" id="cd01989">
    <property type="entry name" value="USP_STK_Ubox_N"/>
    <property type="match status" value="1"/>
</dbReference>
<dbReference type="Gene3D" id="3.40.50.620">
    <property type="entry name" value="HUPs"/>
    <property type="match status" value="1"/>
</dbReference>
<dbReference type="Gene3D" id="3.30.40.10">
    <property type="entry name" value="Zinc/RING finger domain, C3HC4 (zinc finger)"/>
    <property type="match status" value="1"/>
</dbReference>
<dbReference type="InterPro" id="IPR014729">
    <property type="entry name" value="Rossmann-like_a/b/a_fold"/>
</dbReference>
<dbReference type="InterPro" id="IPR051348">
    <property type="entry name" value="U-box_ubiquitin_ligases"/>
</dbReference>
<dbReference type="InterPro" id="IPR003613">
    <property type="entry name" value="Ubox_domain"/>
</dbReference>
<dbReference type="InterPro" id="IPR013083">
    <property type="entry name" value="Znf_RING/FYVE/PHD"/>
</dbReference>
<dbReference type="PANTHER" id="PTHR45647">
    <property type="entry name" value="OS02G0152300 PROTEIN"/>
    <property type="match status" value="1"/>
</dbReference>
<dbReference type="PANTHER" id="PTHR45647:SF35">
    <property type="entry name" value="U-BOX DOMAIN-CONTAINING PROTEIN 55-RELATED"/>
    <property type="match status" value="1"/>
</dbReference>
<dbReference type="Pfam" id="PF04564">
    <property type="entry name" value="U-box"/>
    <property type="match status" value="1"/>
</dbReference>
<dbReference type="SMART" id="SM00504">
    <property type="entry name" value="Ubox"/>
    <property type="match status" value="1"/>
</dbReference>
<dbReference type="SUPFAM" id="SSF57850">
    <property type="entry name" value="RING/U-box"/>
    <property type="match status" value="1"/>
</dbReference>
<dbReference type="PROSITE" id="PS51698">
    <property type="entry name" value="U_BOX"/>
    <property type="match status" value="1"/>
</dbReference>
<proteinExistence type="inferred from homology"/>
<comment type="function">
    <text evidence="1">Functions as an E3 ubiquitin ligase.</text>
</comment>
<comment type="catalytic activity">
    <reaction>
        <text>S-ubiquitinyl-[E2 ubiquitin-conjugating enzyme]-L-cysteine + [acceptor protein]-L-lysine = [E2 ubiquitin-conjugating enzyme]-L-cysteine + N(6)-ubiquitinyl-[acceptor protein]-L-lysine.</text>
        <dbReference type="EC" id="2.3.2.27"/>
    </reaction>
</comment>
<comment type="pathway">
    <text>Protein modification; protein ubiquitination.</text>
</comment>
<comment type="sequence caution" evidence="3">
    <conflict type="erroneous gene model prediction">
        <sequence resource="EMBL-CDS" id="AAF78397"/>
    </conflict>
    <text>The predicted gene has been split into 2 genes: At1g01660 and At1g01670.</text>
</comment>
<protein>
    <recommendedName>
        <fullName>Putative U-box domain-containing protein 55</fullName>
        <ecNumber>2.3.2.27</ecNumber>
    </recommendedName>
    <alternativeName>
        <fullName>Plant U-box protein 55</fullName>
    </alternativeName>
    <alternativeName>
        <fullName evidence="3">RING-type E3 ubiquitin transferase PUB54</fullName>
    </alternativeName>
</protein>
<evidence type="ECO:0000250" key="1"/>
<evidence type="ECO:0000255" key="2"/>
<evidence type="ECO:0000305" key="3"/>
<organism>
    <name type="scientific">Arabidopsis thaliana</name>
    <name type="common">Mouse-ear cress</name>
    <dbReference type="NCBI Taxonomy" id="3702"/>
    <lineage>
        <taxon>Eukaryota</taxon>
        <taxon>Viridiplantae</taxon>
        <taxon>Streptophyta</taxon>
        <taxon>Embryophyta</taxon>
        <taxon>Tracheophyta</taxon>
        <taxon>Spermatophyta</taxon>
        <taxon>Magnoliopsida</taxon>
        <taxon>eudicotyledons</taxon>
        <taxon>Gunneridae</taxon>
        <taxon>Pentapetalae</taxon>
        <taxon>rosids</taxon>
        <taxon>malvids</taxon>
        <taxon>Brassicales</taxon>
        <taxon>Brassicaceae</taxon>
        <taxon>Camelineae</taxon>
        <taxon>Arabidopsis</taxon>
    </lineage>
</organism>
<gene>
    <name type="primary">PUB55</name>
    <name type="ordered locus">At1g01660</name>
    <name type="ORF">T1N6.4</name>
</gene>
<sequence length="568" mass="66036">MAELMAMGNDVVHVAVKSDVRESRSTLLWALRNLGAKKVCILHVYQPKTASPAARKLEELEAIMYETLHDYFDFCQQEGVNEDDIYISCIEMNDVKQGILELIHESKIKKLVMGAASDHHYSEKMFDLKSRKAKYVYQHAPSSCEVMFMCDGHLIYTKEANLEDCMGETESEAGQSKPKLYSSASPKCSAELVSAIVAYIDTRRDRDMLEPNASEDQSESDRNDQLYRQLKQALMEVEESKREAYEECVRRFKAENTAVEAIRSAREYEAMYNEEAKLRKEGKEALAKQRKMVEKTKQERDDALIIILNGRKLYNEELRRRVEAEEMLGKEKEEHERTKKEIEEVRAIVQDGTLYNEQLRHRKEMEESMKRQEEELEKTKKEKEEACMISKNLMQLYEDEVRQRKEAEELVKRRREELEKVKKEKEEACSVGQNFMRLYEEEARRRKGTEEELSKVAAEKDAASSVCSEILLLLQSYTRRHGTPSGFSDEDSVTRQPPSYFICPISQEVMREPRVAADGFTYEAESLREWLDNGHETSPMTNLKLAHNNLVPNHALRSAIQEWLQRNS</sequence>
<feature type="chain" id="PRO_0000322190" description="Putative U-box domain-containing protein 55">
    <location>
        <begin position="1"/>
        <end position="568"/>
    </location>
</feature>
<feature type="domain" description="U-box">
    <location>
        <begin position="496"/>
        <end position="568"/>
    </location>
</feature>
<feature type="coiled-coil region" evidence="2">
    <location>
        <begin position="217"/>
        <end position="464"/>
    </location>
</feature>